<reference key="1">
    <citation type="journal article" date="2002" name="Lancet">
        <title>Genome and virulence determinants of high virulence community-acquired MRSA.</title>
        <authorList>
            <person name="Baba T."/>
            <person name="Takeuchi F."/>
            <person name="Kuroda M."/>
            <person name="Yuzawa H."/>
            <person name="Aoki K."/>
            <person name="Oguchi A."/>
            <person name="Nagai Y."/>
            <person name="Iwama N."/>
            <person name="Asano K."/>
            <person name="Naimi T."/>
            <person name="Kuroda H."/>
            <person name="Cui L."/>
            <person name="Yamamoto K."/>
            <person name="Hiramatsu K."/>
        </authorList>
    </citation>
    <scope>NUCLEOTIDE SEQUENCE [LARGE SCALE GENOMIC DNA]</scope>
    <source>
        <strain>MW2</strain>
    </source>
</reference>
<dbReference type="EMBL" id="BA000033">
    <property type="protein sequence ID" value="BAB94830.1"/>
    <property type="molecule type" value="Genomic_DNA"/>
</dbReference>
<dbReference type="RefSeq" id="WP_000437472.1">
    <property type="nucleotide sequence ID" value="NC_003923.1"/>
</dbReference>
<dbReference type="BMRB" id="P0A0E2"/>
<dbReference type="SMR" id="P0A0E2"/>
<dbReference type="KEGG" id="sam:MW0965"/>
<dbReference type="HOGENOM" id="CLU_136230_2_2_9"/>
<dbReference type="GO" id="GO:0005737">
    <property type="term" value="C:cytoplasm"/>
    <property type="evidence" value="ECO:0007669"/>
    <property type="project" value="UniProtKB-SubCell"/>
</dbReference>
<dbReference type="GO" id="GO:0009401">
    <property type="term" value="P:phosphoenolpyruvate-dependent sugar phosphotransferase system"/>
    <property type="evidence" value="ECO:0007669"/>
    <property type="project" value="UniProtKB-KW"/>
</dbReference>
<dbReference type="CDD" id="cd00367">
    <property type="entry name" value="PTS-HPr_like"/>
    <property type="match status" value="1"/>
</dbReference>
<dbReference type="Gene3D" id="3.30.1340.10">
    <property type="entry name" value="HPr-like"/>
    <property type="match status" value="1"/>
</dbReference>
<dbReference type="InterPro" id="IPR050399">
    <property type="entry name" value="HPr"/>
</dbReference>
<dbReference type="InterPro" id="IPR000032">
    <property type="entry name" value="HPr-like"/>
</dbReference>
<dbReference type="InterPro" id="IPR035895">
    <property type="entry name" value="HPr-like_sf"/>
</dbReference>
<dbReference type="InterPro" id="IPR001020">
    <property type="entry name" value="PTS_HPr_His_P_site"/>
</dbReference>
<dbReference type="InterPro" id="IPR002114">
    <property type="entry name" value="PTS_HPr_Ser_P_site"/>
</dbReference>
<dbReference type="NCBIfam" id="NF010352">
    <property type="entry name" value="PRK13780.1"/>
    <property type="match status" value="1"/>
</dbReference>
<dbReference type="NCBIfam" id="TIGR01003">
    <property type="entry name" value="PTS_HPr_family"/>
    <property type="match status" value="1"/>
</dbReference>
<dbReference type="PANTHER" id="PTHR33705">
    <property type="entry name" value="PHOSPHOCARRIER PROTEIN HPR"/>
    <property type="match status" value="1"/>
</dbReference>
<dbReference type="PANTHER" id="PTHR33705:SF2">
    <property type="entry name" value="PHOSPHOCARRIER PROTEIN NPR"/>
    <property type="match status" value="1"/>
</dbReference>
<dbReference type="Pfam" id="PF00381">
    <property type="entry name" value="PTS-HPr"/>
    <property type="match status" value="1"/>
</dbReference>
<dbReference type="PRINTS" id="PR00107">
    <property type="entry name" value="PHOSPHOCPHPR"/>
</dbReference>
<dbReference type="SUPFAM" id="SSF55594">
    <property type="entry name" value="HPr-like"/>
    <property type="match status" value="1"/>
</dbReference>
<dbReference type="PROSITE" id="PS51350">
    <property type="entry name" value="PTS_HPR_DOM"/>
    <property type="match status" value="1"/>
</dbReference>
<dbReference type="PROSITE" id="PS00369">
    <property type="entry name" value="PTS_HPR_HIS"/>
    <property type="match status" value="1"/>
</dbReference>
<dbReference type="PROSITE" id="PS00589">
    <property type="entry name" value="PTS_HPR_SER"/>
    <property type="match status" value="1"/>
</dbReference>
<protein>
    <recommendedName>
        <fullName>Phosphocarrier protein HPr</fullName>
    </recommendedName>
    <alternativeName>
        <fullName>Histidine-containing protein</fullName>
    </alternativeName>
</protein>
<feature type="chain" id="PRO_0000107877" description="Phosphocarrier protein HPr">
    <location>
        <begin position="1"/>
        <end position="88"/>
    </location>
</feature>
<feature type="domain" description="HPr" evidence="2">
    <location>
        <begin position="1"/>
        <end position="88"/>
    </location>
</feature>
<feature type="active site" description="Pros-phosphohistidine intermediate" evidence="2">
    <location>
        <position position="15"/>
    </location>
</feature>
<feature type="modified residue" description="Phosphoserine; by HPrK/P" evidence="2">
    <location>
        <position position="46"/>
    </location>
</feature>
<gene>
    <name type="primary">ptsH</name>
    <name type="ordered locus">MW0965</name>
</gene>
<sequence>MEQNSYVIIDETGIHARPATMLVQTASKFDSDIQLEYNGKKVNLKSIMGVMSLGVGKDAEITIYADGSDESDAIQAISDVLSKEGLTK</sequence>
<organism>
    <name type="scientific">Staphylococcus aureus (strain MW2)</name>
    <dbReference type="NCBI Taxonomy" id="196620"/>
    <lineage>
        <taxon>Bacteria</taxon>
        <taxon>Bacillati</taxon>
        <taxon>Bacillota</taxon>
        <taxon>Bacilli</taxon>
        <taxon>Bacillales</taxon>
        <taxon>Staphylococcaceae</taxon>
        <taxon>Staphylococcus</taxon>
    </lineage>
</organism>
<name>PTHP_STAAW</name>
<accession>P0A0E2</accession>
<accession>P02907</accession>
<keyword id="KW-0963">Cytoplasm</keyword>
<keyword id="KW-0597">Phosphoprotein</keyword>
<keyword id="KW-0598">Phosphotransferase system</keyword>
<keyword id="KW-0762">Sugar transport</keyword>
<keyword id="KW-0804">Transcription</keyword>
<keyword id="KW-0805">Transcription regulation</keyword>
<keyword id="KW-0813">Transport</keyword>
<comment type="function">
    <text evidence="1">General (non sugar-specific) component of the phosphoenolpyruvate-dependent sugar phosphotransferase system (sugar PTS). This major carbohydrate active-transport system catalyzes the phosphorylation of incoming sugar substrates concomitantly with their translocation across the cell membrane. The phosphoryl group from phosphoenolpyruvate (PEP) is transferred to the phosphoryl carrier protein HPr by enzyme I. Phospho-HPr then transfers it to the PTS EIIA domain.</text>
</comment>
<comment type="function">
    <text evidence="1">P-Ser-HPr interacts with the catabolite control protein A (CcpA), forming a complex that binds to DNA at the catabolite response elements cre, operator sites preceding a large number of catabolite-regulated genes. Thus, P-Ser-HPr is a corepressor in carbon catabolite repression (CCR), a mechanism that allows bacteria to coordinate and optimize the utilization of available carbon sources. P-Ser-HPr also plays a role in inducer exclusion, in which it probably interacts with several non-PTS permeases and inhibits their transport activity (By similarity).</text>
</comment>
<comment type="activity regulation">
    <text evidence="1">Phosphorylation on Ser-46 inhibits the phosphoryl transfer from enzyme I to HPr.</text>
</comment>
<comment type="subcellular location">
    <subcellularLocation>
        <location evidence="1">Cytoplasm</location>
    </subcellularLocation>
</comment>
<comment type="similarity">
    <text evidence="3">Belongs to the HPr family.</text>
</comment>
<proteinExistence type="inferred from homology"/>
<evidence type="ECO:0000250" key="1"/>
<evidence type="ECO:0000255" key="2">
    <source>
        <dbReference type="PROSITE-ProRule" id="PRU00681"/>
    </source>
</evidence>
<evidence type="ECO:0000305" key="3"/>